<reference key="1">
    <citation type="journal article" date="2003" name="Proc. Natl. Acad. Sci. U.S.A.">
        <title>Reductive genome evolution in Buchnera aphidicola.</title>
        <authorList>
            <person name="van Ham R.C.H.J."/>
            <person name="Kamerbeek J."/>
            <person name="Palacios C."/>
            <person name="Rausell C."/>
            <person name="Abascal F."/>
            <person name="Bastolla U."/>
            <person name="Fernandez J.M."/>
            <person name="Jimenez L."/>
            <person name="Postigo M."/>
            <person name="Silva F.J."/>
            <person name="Tamames J."/>
            <person name="Viguera E."/>
            <person name="Latorre A."/>
            <person name="Valencia A."/>
            <person name="Moran F."/>
            <person name="Moya A."/>
        </authorList>
    </citation>
    <scope>NUCLEOTIDE SEQUENCE [LARGE SCALE GENOMIC DNA]</scope>
    <source>
        <strain>Bp</strain>
    </source>
</reference>
<dbReference type="EC" id="3.6.4.-"/>
<dbReference type="EMBL" id="AE016826">
    <property type="protein sequence ID" value="AAO27000.1"/>
    <property type="molecule type" value="Genomic_DNA"/>
</dbReference>
<dbReference type="RefSeq" id="WP_011091401.1">
    <property type="nucleotide sequence ID" value="NC_004545.1"/>
</dbReference>
<dbReference type="SMR" id="Q89AK2"/>
<dbReference type="STRING" id="224915.bbp_275"/>
<dbReference type="KEGG" id="bab:bbp_275"/>
<dbReference type="eggNOG" id="COG1197">
    <property type="taxonomic scope" value="Bacteria"/>
</dbReference>
<dbReference type="HOGENOM" id="CLU_005122_8_2_6"/>
<dbReference type="OrthoDB" id="9804325at2"/>
<dbReference type="Proteomes" id="UP000000601">
    <property type="component" value="Chromosome"/>
</dbReference>
<dbReference type="GO" id="GO:0005737">
    <property type="term" value="C:cytoplasm"/>
    <property type="evidence" value="ECO:0007669"/>
    <property type="project" value="UniProtKB-SubCell"/>
</dbReference>
<dbReference type="GO" id="GO:0005524">
    <property type="term" value="F:ATP binding"/>
    <property type="evidence" value="ECO:0007669"/>
    <property type="project" value="UniProtKB-KW"/>
</dbReference>
<dbReference type="GO" id="GO:0003684">
    <property type="term" value="F:damaged DNA binding"/>
    <property type="evidence" value="ECO:0007669"/>
    <property type="project" value="InterPro"/>
</dbReference>
<dbReference type="GO" id="GO:0003678">
    <property type="term" value="F:DNA helicase activity"/>
    <property type="evidence" value="ECO:0007669"/>
    <property type="project" value="TreeGrafter"/>
</dbReference>
<dbReference type="GO" id="GO:0016787">
    <property type="term" value="F:hydrolase activity"/>
    <property type="evidence" value="ECO:0007669"/>
    <property type="project" value="UniProtKB-KW"/>
</dbReference>
<dbReference type="GO" id="GO:0006281">
    <property type="term" value="P:DNA repair"/>
    <property type="evidence" value="ECO:0007669"/>
    <property type="project" value="UniProtKB-KW"/>
</dbReference>
<dbReference type="CDD" id="cd17991">
    <property type="entry name" value="DEXHc_TRCF"/>
    <property type="match status" value="1"/>
</dbReference>
<dbReference type="FunFam" id="3.40.50.300:FF:000300">
    <property type="entry name" value="Transcription-repair-coupling factor"/>
    <property type="match status" value="1"/>
</dbReference>
<dbReference type="FunFam" id="3.40.50.300:FF:000546">
    <property type="entry name" value="Transcription-repair-coupling factor"/>
    <property type="match status" value="1"/>
</dbReference>
<dbReference type="Gene3D" id="2.40.10.170">
    <property type="match status" value="1"/>
</dbReference>
<dbReference type="Gene3D" id="3.40.50.300">
    <property type="entry name" value="P-loop containing nucleotide triphosphate hydrolases"/>
    <property type="match status" value="2"/>
</dbReference>
<dbReference type="Gene3D" id="3.90.1150.50">
    <property type="entry name" value="Transcription-repair-coupling factor, D7 domain"/>
    <property type="match status" value="1"/>
</dbReference>
<dbReference type="InterPro" id="IPR003711">
    <property type="entry name" value="CarD-like/TRCF_RID"/>
</dbReference>
<dbReference type="InterPro" id="IPR036101">
    <property type="entry name" value="CarD-like/TRCF_RID_sf"/>
</dbReference>
<dbReference type="InterPro" id="IPR011545">
    <property type="entry name" value="DEAD/DEAH_box_helicase_dom"/>
</dbReference>
<dbReference type="InterPro" id="IPR014001">
    <property type="entry name" value="Helicase_ATP-bd"/>
</dbReference>
<dbReference type="InterPro" id="IPR001650">
    <property type="entry name" value="Helicase_C-like"/>
</dbReference>
<dbReference type="InterPro" id="IPR004576">
    <property type="entry name" value="Mfd"/>
</dbReference>
<dbReference type="InterPro" id="IPR027417">
    <property type="entry name" value="P-loop_NTPase"/>
</dbReference>
<dbReference type="InterPro" id="IPR047112">
    <property type="entry name" value="RecG/Mfd"/>
</dbReference>
<dbReference type="InterPro" id="IPR037235">
    <property type="entry name" value="TRCF-like_C_D7"/>
</dbReference>
<dbReference type="InterPro" id="IPR005118">
    <property type="entry name" value="TRCF_C"/>
</dbReference>
<dbReference type="NCBIfam" id="TIGR00580">
    <property type="entry name" value="mfd"/>
    <property type="match status" value="1"/>
</dbReference>
<dbReference type="PANTHER" id="PTHR47964">
    <property type="entry name" value="ATP-DEPENDENT DNA HELICASE HOMOLOG RECG, CHLOROPLASTIC"/>
    <property type="match status" value="1"/>
</dbReference>
<dbReference type="PANTHER" id="PTHR47964:SF1">
    <property type="entry name" value="ATP-DEPENDENT DNA HELICASE HOMOLOG RECG, CHLOROPLASTIC"/>
    <property type="match status" value="1"/>
</dbReference>
<dbReference type="Pfam" id="PF02559">
    <property type="entry name" value="CarD_TRCF_RID"/>
    <property type="match status" value="1"/>
</dbReference>
<dbReference type="Pfam" id="PF00270">
    <property type="entry name" value="DEAD"/>
    <property type="match status" value="1"/>
</dbReference>
<dbReference type="Pfam" id="PF00271">
    <property type="entry name" value="Helicase_C"/>
    <property type="match status" value="1"/>
</dbReference>
<dbReference type="Pfam" id="PF03461">
    <property type="entry name" value="TRCF"/>
    <property type="match status" value="1"/>
</dbReference>
<dbReference type="SMART" id="SM01058">
    <property type="entry name" value="CarD_TRCF"/>
    <property type="match status" value="1"/>
</dbReference>
<dbReference type="SMART" id="SM00487">
    <property type="entry name" value="DEXDc"/>
    <property type="match status" value="1"/>
</dbReference>
<dbReference type="SMART" id="SM00490">
    <property type="entry name" value="HELICc"/>
    <property type="match status" value="1"/>
</dbReference>
<dbReference type="SMART" id="SM00982">
    <property type="entry name" value="TRCF"/>
    <property type="match status" value="1"/>
</dbReference>
<dbReference type="SUPFAM" id="SSF141259">
    <property type="entry name" value="CarD-like"/>
    <property type="match status" value="1"/>
</dbReference>
<dbReference type="SUPFAM" id="SSF52540">
    <property type="entry name" value="P-loop containing nucleoside triphosphate hydrolases"/>
    <property type="match status" value="2"/>
</dbReference>
<dbReference type="SUPFAM" id="SSF143517">
    <property type="entry name" value="TRCF domain-like"/>
    <property type="match status" value="1"/>
</dbReference>
<dbReference type="PROSITE" id="PS51192">
    <property type="entry name" value="HELICASE_ATP_BIND_1"/>
    <property type="match status" value="1"/>
</dbReference>
<dbReference type="PROSITE" id="PS51194">
    <property type="entry name" value="HELICASE_CTER"/>
    <property type="match status" value="1"/>
</dbReference>
<sequence length="697" mass="80419">MLIKSLVQKNQVYFTNNSLDEKNICDLSKLKINQPIVHFEHGVGRYQGLTTVTTRNIKTECVVINYAQNSKLYVPITYLYLISRYIGTSKKDIPLHRLGNDLWNKEKKKANEKAYDSAAILLNIYSHRISQKGFSFKKHHTKYKIFCERFPFTLTPDQDSAINSVLSDMYKSTPMDRLVCGDVGFGKTEVAMRATFLAVCNQKQVAILVPTTLLAQQHFNNFTLRFKYWSTKIEILSRFQSETKCNEIINNVNIGNVHVLIGTHKILLKNLKWKNLGLLIVDEEHRFGVHHKEQIKLISNNIDVLTLTATPIPRTLNMAFVGIRDLSIIATPPKQRLIVKTFVREFSYTVIRKAILREILRGGQVYYIYNNVNKIERKKIELKKLVPEANIRIGHGQLRSTDLESIMNDFYHKRFNVLVCSTIIETGIDIPNVNTIIIENANNFGLAQLHQLRGRVGRSQHQAYAWLLVPSLKDIKSDAKKRIDAITSIESFGSCFELANRDLEIRGIGEILGNNQSGHITKIGFSLYMKLLMNAVRNIKNGYYKPLNDIINTYPKIELNVSNLLPDSYIKKVNHRLFFYNKIATSNNFLDLEKIRLTLCKNFGNLPNSGDYLIKIAKIRLISKKIGVKKIKSDVKGGYIEFFEDSKINIQNLLKEFKKEKNCWKFDTSNRLRFSKNFKNNSERIDWILNMLININN</sequence>
<comment type="function">
    <text evidence="1">Couples transcription and DNA repair by recognizing RNA polymerase (RNAP) stalled at DNA lesions. Mediates ATP-dependent release of RNAP and its truncated transcript from the DNA, and recruitment of nucleotide excision repair machinery to the damaged site (By similarity).</text>
</comment>
<comment type="subcellular location">
    <subcellularLocation>
        <location evidence="4">Cytoplasm</location>
    </subcellularLocation>
</comment>
<comment type="similarity">
    <text evidence="4">In the N-terminal section; belongs to the UvrB family.</text>
</comment>
<comment type="similarity">
    <text evidence="4">In the C-terminal section; belongs to the helicase family. RecG subfamily.</text>
</comment>
<keyword id="KW-0067">ATP-binding</keyword>
<keyword id="KW-0963">Cytoplasm</keyword>
<keyword id="KW-0227">DNA damage</keyword>
<keyword id="KW-0234">DNA repair</keyword>
<keyword id="KW-0238">DNA-binding</keyword>
<keyword id="KW-0347">Helicase</keyword>
<keyword id="KW-0378">Hydrolase</keyword>
<keyword id="KW-0547">Nucleotide-binding</keyword>
<keyword id="KW-1185">Reference proteome</keyword>
<feature type="chain" id="PRO_0000102165" description="Transcription-repair-coupling factor">
    <location>
        <begin position="1"/>
        <end position="697"/>
    </location>
</feature>
<feature type="domain" description="Helicase ATP-binding" evidence="2">
    <location>
        <begin position="168"/>
        <end position="329"/>
    </location>
</feature>
<feature type="domain" description="Helicase C-terminal" evidence="3">
    <location>
        <begin position="350"/>
        <end position="504"/>
    </location>
</feature>
<feature type="short sequence motif" description="DEEH box">
    <location>
        <begin position="282"/>
        <end position="285"/>
    </location>
</feature>
<feature type="binding site" evidence="2">
    <location>
        <begin position="181"/>
        <end position="188"/>
    </location>
    <ligand>
        <name>ATP</name>
        <dbReference type="ChEBI" id="CHEBI:30616"/>
    </ligand>
</feature>
<accession>Q89AK2</accession>
<gene>
    <name type="primary">mfd</name>
    <name type="ordered locus">bbp_275</name>
</gene>
<protein>
    <recommendedName>
        <fullName>Transcription-repair-coupling factor</fullName>
        <shortName>TRCF</shortName>
        <ecNumber>3.6.4.-</ecNumber>
    </recommendedName>
</protein>
<proteinExistence type="inferred from homology"/>
<evidence type="ECO:0000250" key="1"/>
<evidence type="ECO:0000255" key="2">
    <source>
        <dbReference type="PROSITE-ProRule" id="PRU00541"/>
    </source>
</evidence>
<evidence type="ECO:0000255" key="3">
    <source>
        <dbReference type="PROSITE-ProRule" id="PRU00542"/>
    </source>
</evidence>
<evidence type="ECO:0000305" key="4"/>
<organism>
    <name type="scientific">Buchnera aphidicola subsp. Baizongia pistaciae (strain Bp)</name>
    <dbReference type="NCBI Taxonomy" id="224915"/>
    <lineage>
        <taxon>Bacteria</taxon>
        <taxon>Pseudomonadati</taxon>
        <taxon>Pseudomonadota</taxon>
        <taxon>Gammaproteobacteria</taxon>
        <taxon>Enterobacterales</taxon>
        <taxon>Erwiniaceae</taxon>
        <taxon>Buchnera</taxon>
    </lineage>
</organism>
<name>MFD_BUCBP</name>